<reference key="1">
    <citation type="journal article" date="2000" name="Gene">
        <title>Cloning of CCRL1, an orphan seven transmembrane receptor related to chemokine receptors, expressed abundantly in the heart.</title>
        <authorList>
            <person name="Khoja H."/>
            <person name="Wang G."/>
            <person name="Ng C.-T.L."/>
            <person name="Tucker J."/>
            <person name="Brown T."/>
            <person name="Shyamala V."/>
        </authorList>
    </citation>
    <scope>NUCLEOTIDE SEQUENCE [MRNA]</scope>
    <scope>TISSUE SPECIFICITY</scope>
</reference>
<reference key="2">
    <citation type="journal article" date="2000" name="J. Biol. Chem.">
        <title>CCR11 is a functional receptor for the monocyte chemoattractant protein family of chemokines.</title>
        <authorList>
            <person name="Schweickart V.L."/>
            <person name="Epp A."/>
            <person name="Raport C.J."/>
            <person name="Gray P.W."/>
        </authorList>
    </citation>
    <scope>NUCLEOTIDE SEQUENCE [GENOMIC DNA]</scope>
    <scope>TISSUE SPECIFICITY</scope>
</reference>
<reference key="3">
    <citation type="journal article" date="2000" name="J. Immunol.">
        <title>Identification of a novel chemokine receptor that binds dendritic cell- and T cell-active chemokines including ELC, SLC, and TECK.</title>
        <authorList>
            <person name="Gosling J."/>
            <person name="Dairaghi D.J."/>
            <person name="Wang Y."/>
            <person name="Hanley M."/>
            <person name="Talbot D."/>
            <person name="Miao Z."/>
            <person name="Schall T.J."/>
        </authorList>
    </citation>
    <scope>NUCLEOTIDE SEQUENCE [GENOMIC DNA]</scope>
    <scope>FUNCTION IN CHEMOKINES BINDING</scope>
</reference>
<reference key="4">
    <citation type="submission" date="2003-01" db="EMBL/GenBank/DDBJ databases">
        <title>cDNA clones of human proteins involved in signal transduction sequenced by the Guthrie cDNA resource center (www.cdna.org).</title>
        <authorList>
            <person name="Kopatz S.A."/>
            <person name="Aronstam R.S."/>
            <person name="Sharma S.V."/>
        </authorList>
    </citation>
    <scope>NUCLEOTIDE SEQUENCE [LARGE SCALE MRNA]</scope>
</reference>
<reference key="5">
    <citation type="journal article" date="2004" name="Nat. Genet.">
        <title>Complete sequencing and characterization of 21,243 full-length human cDNAs.</title>
        <authorList>
            <person name="Ota T."/>
            <person name="Suzuki Y."/>
            <person name="Nishikawa T."/>
            <person name="Otsuki T."/>
            <person name="Sugiyama T."/>
            <person name="Irie R."/>
            <person name="Wakamatsu A."/>
            <person name="Hayashi K."/>
            <person name="Sato H."/>
            <person name="Nagai K."/>
            <person name="Kimura K."/>
            <person name="Makita H."/>
            <person name="Sekine M."/>
            <person name="Obayashi M."/>
            <person name="Nishi T."/>
            <person name="Shibahara T."/>
            <person name="Tanaka T."/>
            <person name="Ishii S."/>
            <person name="Yamamoto J."/>
            <person name="Saito K."/>
            <person name="Kawai Y."/>
            <person name="Isono Y."/>
            <person name="Nakamura Y."/>
            <person name="Nagahari K."/>
            <person name="Murakami K."/>
            <person name="Yasuda T."/>
            <person name="Iwayanagi T."/>
            <person name="Wagatsuma M."/>
            <person name="Shiratori A."/>
            <person name="Sudo H."/>
            <person name="Hosoiri T."/>
            <person name="Kaku Y."/>
            <person name="Kodaira H."/>
            <person name="Kondo H."/>
            <person name="Sugawara M."/>
            <person name="Takahashi M."/>
            <person name="Kanda K."/>
            <person name="Yokoi T."/>
            <person name="Furuya T."/>
            <person name="Kikkawa E."/>
            <person name="Omura Y."/>
            <person name="Abe K."/>
            <person name="Kamihara K."/>
            <person name="Katsuta N."/>
            <person name="Sato K."/>
            <person name="Tanikawa M."/>
            <person name="Yamazaki M."/>
            <person name="Ninomiya K."/>
            <person name="Ishibashi T."/>
            <person name="Yamashita H."/>
            <person name="Murakawa K."/>
            <person name="Fujimori K."/>
            <person name="Tanai H."/>
            <person name="Kimata M."/>
            <person name="Watanabe M."/>
            <person name="Hiraoka S."/>
            <person name="Chiba Y."/>
            <person name="Ishida S."/>
            <person name="Ono Y."/>
            <person name="Takiguchi S."/>
            <person name="Watanabe S."/>
            <person name="Yosida M."/>
            <person name="Hotuta T."/>
            <person name="Kusano J."/>
            <person name="Kanehori K."/>
            <person name="Takahashi-Fujii A."/>
            <person name="Hara H."/>
            <person name="Tanase T.-O."/>
            <person name="Nomura Y."/>
            <person name="Togiya S."/>
            <person name="Komai F."/>
            <person name="Hara R."/>
            <person name="Takeuchi K."/>
            <person name="Arita M."/>
            <person name="Imose N."/>
            <person name="Musashino K."/>
            <person name="Yuuki H."/>
            <person name="Oshima A."/>
            <person name="Sasaki N."/>
            <person name="Aotsuka S."/>
            <person name="Yoshikawa Y."/>
            <person name="Matsunawa H."/>
            <person name="Ichihara T."/>
            <person name="Shiohata N."/>
            <person name="Sano S."/>
            <person name="Moriya S."/>
            <person name="Momiyama H."/>
            <person name="Satoh N."/>
            <person name="Takami S."/>
            <person name="Terashima Y."/>
            <person name="Suzuki O."/>
            <person name="Nakagawa S."/>
            <person name="Senoh A."/>
            <person name="Mizoguchi H."/>
            <person name="Goto Y."/>
            <person name="Shimizu F."/>
            <person name="Wakebe H."/>
            <person name="Hishigaki H."/>
            <person name="Watanabe T."/>
            <person name="Sugiyama A."/>
            <person name="Takemoto M."/>
            <person name="Kawakami B."/>
            <person name="Yamazaki M."/>
            <person name="Watanabe K."/>
            <person name="Kumagai A."/>
            <person name="Itakura S."/>
            <person name="Fukuzumi Y."/>
            <person name="Fujimori Y."/>
            <person name="Komiyama M."/>
            <person name="Tashiro H."/>
            <person name="Tanigami A."/>
            <person name="Fujiwara T."/>
            <person name="Ono T."/>
            <person name="Yamada K."/>
            <person name="Fujii Y."/>
            <person name="Ozaki K."/>
            <person name="Hirao M."/>
            <person name="Ohmori Y."/>
            <person name="Kawabata A."/>
            <person name="Hikiji T."/>
            <person name="Kobatake N."/>
            <person name="Inagaki H."/>
            <person name="Ikema Y."/>
            <person name="Okamoto S."/>
            <person name="Okitani R."/>
            <person name="Kawakami T."/>
            <person name="Noguchi S."/>
            <person name="Itoh T."/>
            <person name="Shigeta K."/>
            <person name="Senba T."/>
            <person name="Matsumura K."/>
            <person name="Nakajima Y."/>
            <person name="Mizuno T."/>
            <person name="Morinaga M."/>
            <person name="Sasaki M."/>
            <person name="Togashi T."/>
            <person name="Oyama M."/>
            <person name="Hata H."/>
            <person name="Watanabe M."/>
            <person name="Komatsu T."/>
            <person name="Mizushima-Sugano J."/>
            <person name="Satoh T."/>
            <person name="Shirai Y."/>
            <person name="Takahashi Y."/>
            <person name="Nakagawa K."/>
            <person name="Okumura K."/>
            <person name="Nagase T."/>
            <person name="Nomura N."/>
            <person name="Kikuchi H."/>
            <person name="Masuho Y."/>
            <person name="Yamashita R."/>
            <person name="Nakai K."/>
            <person name="Yada T."/>
            <person name="Nakamura Y."/>
            <person name="Ohara O."/>
            <person name="Isogai T."/>
            <person name="Sugano S."/>
        </authorList>
    </citation>
    <scope>NUCLEOTIDE SEQUENCE [LARGE SCALE MRNA]</scope>
</reference>
<reference key="6">
    <citation type="journal article" date="2004" name="Genome Res.">
        <title>The status, quality, and expansion of the NIH full-length cDNA project: the Mammalian Gene Collection (MGC).</title>
        <authorList>
            <consortium name="The MGC Project Team"/>
        </authorList>
    </citation>
    <scope>NUCLEOTIDE SEQUENCE [LARGE SCALE MRNA]</scope>
</reference>
<reference key="7">
    <citation type="journal article" date="2002" name="Eur. J. Immunol.">
        <title>Characterization of mouse CCX-CKR, a receptor for the lymphocyte-attracting chemokines TECK/mCCL25, SLC/mCCL21 and MIP-3beta/mCCL19: comparison to human CCX-CKR.</title>
        <authorList>
            <person name="Townson J.R."/>
            <person name="Nibbs R.J."/>
        </authorList>
    </citation>
    <scope>TISSUE SPECIFICITY</scope>
</reference>
<reference key="8">
    <citation type="journal article" date="2010" name="Curr. Top. Microbiol. Immunol.">
        <title>Chemokine decoy receptors: structure-function and biological properties.</title>
        <authorList>
            <person name="Bonecchi R."/>
            <person name="Savino B."/>
            <person name="Borroni E.M."/>
            <person name="Mantovani A."/>
            <person name="Locati M."/>
        </authorList>
    </citation>
    <scope>REVIEW</scope>
</reference>
<reference key="9">
    <citation type="journal article" date="2012" name="Immunol. Lett.">
        <title>The biochemistry and biology of the atypical chemokine receptors.</title>
        <authorList>
            <person name="Graham G.J."/>
            <person name="Locati M."/>
            <person name="Mantovani A."/>
            <person name="Rot A."/>
            <person name="Thelen M."/>
        </authorList>
    </citation>
    <scope>REVIEW</scope>
</reference>
<reference key="10">
    <citation type="journal article" date="2013" name="Biochem. Soc. Trans.">
        <title>Atypical chemokine receptors: from silence to sound.</title>
        <authorList>
            <person name="Cancellieri C."/>
            <person name="Vacchini A."/>
            <person name="Locati M."/>
            <person name="Bonecchi R."/>
            <person name="Borroni E.M."/>
        </authorList>
    </citation>
    <scope>REVIEW</scope>
</reference>
<reference key="11">
    <citation type="journal article" date="2013" name="Br. J. Pharmacol.">
        <title>Inhibition of CXCR3-mediated chemotaxis by the human chemokine receptor-like protein CCX-CKR.</title>
        <authorList>
            <person name="Vinet J."/>
            <person name="van Zwam M."/>
            <person name="Dijkstra I.M."/>
            <person name="Brouwer N."/>
            <person name="van Weering H.R."/>
            <person name="Watts A."/>
            <person name="Meijer M."/>
            <person name="Fokkens M.R."/>
            <person name="Kannan V."/>
            <person name="Verzijl D."/>
            <person name="Vischer H.F."/>
            <person name="Smit M.J."/>
            <person name="Leurs R."/>
            <person name="Biber K."/>
            <person name="Boddeke H.W."/>
        </authorList>
    </citation>
    <scope>FUNCTION</scope>
    <scope>SUBUNIT</scope>
</reference>
<reference key="12">
    <citation type="journal article" date="2013" name="J. Biol. Chem.">
        <title>Beta-arrestin recruitment and G protein signaling by the atypical human chemokine decoy receptor CCX-CKR.</title>
        <authorList>
            <person name="Watts A.O."/>
            <person name="Verkaar F."/>
            <person name="van der Lee M.M."/>
            <person name="Timmerman C.A."/>
            <person name="Kuijer M."/>
            <person name="van Offenbeek J."/>
            <person name="van Lith L.H."/>
            <person name="Smit M.J."/>
            <person name="Leurs R."/>
            <person name="Zaman G.J."/>
            <person name="Vischer H.F."/>
        </authorList>
    </citation>
    <scope>FUNCTION</scope>
    <scope>SUBCELLULAR LOCATION</scope>
    <scope>INTERACTION WITH ARRB1 AND ARRB2</scope>
</reference>
<sequence length="350" mass="39914">MALEQNQSTDYYYEENEMNGTYDYSQYELICIKEDVREFAKVFLPVFLTIVFVIGLAGNSMVVAIYAYYKKQRTKTDVYILNLAVADLLLLFTLPFWAVNAVHGWVLGKIMCKITSALYTLNFVSGMQFLACISIDRYVAVTKVPSQSGVGKPCWIICFCVWMAAILLSIPQLVFYTVNDNARCIPIFPRYLGTSMKALIQMLEICIGFVVPFLIMGVCYFITARTLMKMPNIKISRPLKVLLTVVIVFIVTQLPYNIVKFCRAIDIIYSLITSCNMSKRMDIAIQVTESIALFHSCLNPILYVFMGASFKNYVMKVAKKYGSWRRQRQSVEEFPFDSEGPTEPTSTFSI</sequence>
<gene>
    <name type="primary">ACKR4</name>
    <name type="synonym">CCBP2</name>
    <name type="synonym">CCR11</name>
    <name type="synonym">CCRL1</name>
    <name type="synonym">VSHK1</name>
</gene>
<feature type="chain" id="PRO_0000069296" description="Atypical chemokine receptor 4">
    <location>
        <begin position="1"/>
        <end position="350"/>
    </location>
</feature>
<feature type="topological domain" description="Extracellular" evidence="1">
    <location>
        <begin position="1"/>
        <end position="42"/>
    </location>
</feature>
<feature type="transmembrane region" description="Helical; Name=1" evidence="1">
    <location>
        <begin position="43"/>
        <end position="63"/>
    </location>
</feature>
<feature type="topological domain" description="Cytoplasmic" evidence="1">
    <location>
        <begin position="64"/>
        <end position="87"/>
    </location>
</feature>
<feature type="transmembrane region" description="Helical; Name=2" evidence="1">
    <location>
        <begin position="88"/>
        <end position="108"/>
    </location>
</feature>
<feature type="topological domain" description="Extracellular" evidence="1">
    <location>
        <begin position="109"/>
        <end position="113"/>
    </location>
</feature>
<feature type="transmembrane region" description="Helical; Name=3" evidence="1">
    <location>
        <begin position="114"/>
        <end position="134"/>
    </location>
</feature>
<feature type="topological domain" description="Cytoplasmic" evidence="1">
    <location>
        <begin position="135"/>
        <end position="154"/>
    </location>
</feature>
<feature type="transmembrane region" description="Helical; Name=4" evidence="1">
    <location>
        <begin position="155"/>
        <end position="175"/>
    </location>
</feature>
<feature type="topological domain" description="Extracellular" evidence="1">
    <location>
        <begin position="176"/>
        <end position="201"/>
    </location>
</feature>
<feature type="transmembrane region" description="Helical; Name=5" evidence="1">
    <location>
        <begin position="202"/>
        <end position="222"/>
    </location>
</feature>
<feature type="topological domain" description="Cytoplasmic" evidence="1">
    <location>
        <begin position="223"/>
        <end position="240"/>
    </location>
</feature>
<feature type="transmembrane region" description="Helical; Name=6" evidence="1">
    <location>
        <begin position="241"/>
        <end position="261"/>
    </location>
</feature>
<feature type="topological domain" description="Extracellular" evidence="1">
    <location>
        <begin position="262"/>
        <end position="289"/>
    </location>
</feature>
<feature type="transmembrane region" description="Helical; Name=7" evidence="1">
    <location>
        <begin position="290"/>
        <end position="310"/>
    </location>
</feature>
<feature type="topological domain" description="Cytoplasmic" evidence="1">
    <location>
        <begin position="311"/>
        <end position="350"/>
    </location>
</feature>
<feature type="glycosylation site" description="N-linked (GlcNAc...) asparagine" evidence="1">
    <location>
        <position position="6"/>
    </location>
</feature>
<feature type="glycosylation site" description="N-linked (GlcNAc...) asparagine" evidence="1">
    <location>
        <position position="19"/>
    </location>
</feature>
<feature type="disulfide bond" evidence="2">
    <location>
        <begin position="112"/>
        <end position="184"/>
    </location>
</feature>
<accession>Q9NPB9</accession>
<accession>B2R9U7</accession>
<organism>
    <name type="scientific">Homo sapiens</name>
    <name type="common">Human</name>
    <dbReference type="NCBI Taxonomy" id="9606"/>
    <lineage>
        <taxon>Eukaryota</taxon>
        <taxon>Metazoa</taxon>
        <taxon>Chordata</taxon>
        <taxon>Craniata</taxon>
        <taxon>Vertebrata</taxon>
        <taxon>Euteleostomi</taxon>
        <taxon>Mammalia</taxon>
        <taxon>Eutheria</taxon>
        <taxon>Euarchontoglires</taxon>
        <taxon>Primates</taxon>
        <taxon>Haplorrhini</taxon>
        <taxon>Catarrhini</taxon>
        <taxon>Hominidae</taxon>
        <taxon>Homo</taxon>
    </lineage>
</organism>
<name>ACKR4_HUMAN</name>
<proteinExistence type="evidence at protein level"/>
<keyword id="KW-1003">Cell membrane</keyword>
<keyword id="KW-1015">Disulfide bond</keyword>
<keyword id="KW-0967">Endosome</keyword>
<keyword id="KW-0297">G-protein coupled receptor</keyword>
<keyword id="KW-0325">Glycoprotein</keyword>
<keyword id="KW-0472">Membrane</keyword>
<keyword id="KW-0597">Phosphoprotein</keyword>
<keyword id="KW-1267">Proteomics identification</keyword>
<keyword id="KW-0675">Receptor</keyword>
<keyword id="KW-1185">Reference proteome</keyword>
<keyword id="KW-0807">Transducer</keyword>
<keyword id="KW-0812">Transmembrane</keyword>
<keyword id="KW-1133">Transmembrane helix</keyword>
<protein>
    <recommendedName>
        <fullName>Atypical chemokine receptor 4</fullName>
    </recommendedName>
    <alternativeName>
        <fullName>C-C chemokine receptor type 11</fullName>
        <shortName>C-C CKR-11</shortName>
        <shortName>CC-CKR-11</shortName>
        <shortName>CCR-11</shortName>
    </alternativeName>
    <alternativeName>
        <fullName>CC chemokine receptor-like 1</fullName>
        <shortName>CCRL1</shortName>
    </alternativeName>
    <alternativeName>
        <fullName>CCX CKR</fullName>
    </alternativeName>
</protein>
<dbReference type="EMBL" id="AF110640">
    <property type="protein sequence ID" value="AAF59827.1"/>
    <property type="molecule type" value="mRNA"/>
</dbReference>
<dbReference type="EMBL" id="AF193507">
    <property type="protein sequence ID" value="AAF61299.1"/>
    <property type="molecule type" value="Genomic_DNA"/>
</dbReference>
<dbReference type="EMBL" id="AF233281">
    <property type="protein sequence ID" value="AAF44751.1"/>
    <property type="molecule type" value="Genomic_DNA"/>
</dbReference>
<dbReference type="EMBL" id="AY221094">
    <property type="protein sequence ID" value="AAO65972.1"/>
    <property type="molecule type" value="Genomic_DNA"/>
</dbReference>
<dbReference type="EMBL" id="AK313923">
    <property type="protein sequence ID" value="BAG36644.1"/>
    <property type="molecule type" value="mRNA"/>
</dbReference>
<dbReference type="EMBL" id="BC069438">
    <property type="protein sequence ID" value="AAH69438.1"/>
    <property type="molecule type" value="mRNA"/>
</dbReference>
<dbReference type="CCDS" id="CCDS3075.1"/>
<dbReference type="RefSeq" id="NP_057641.1">
    <property type="nucleotide sequence ID" value="NM_016557.4"/>
</dbReference>
<dbReference type="RefSeq" id="NP_848540.1">
    <property type="nucleotide sequence ID" value="NM_178445.2"/>
</dbReference>
<dbReference type="SMR" id="Q9NPB9"/>
<dbReference type="BioGRID" id="119606">
    <property type="interactions" value="9"/>
</dbReference>
<dbReference type="DIP" id="DIP-5918N"/>
<dbReference type="FunCoup" id="Q9NPB9">
    <property type="interactions" value="729"/>
</dbReference>
<dbReference type="IntAct" id="Q9NPB9">
    <property type="interactions" value="4"/>
</dbReference>
<dbReference type="STRING" id="9606.ENSP00000249887"/>
<dbReference type="GuidetoPHARMACOLOGY" id="315"/>
<dbReference type="GlyCosmos" id="Q9NPB9">
    <property type="glycosylation" value="2 sites, No reported glycans"/>
</dbReference>
<dbReference type="GlyGen" id="Q9NPB9">
    <property type="glycosylation" value="3 sites"/>
</dbReference>
<dbReference type="iPTMnet" id="Q9NPB9"/>
<dbReference type="PhosphoSitePlus" id="Q9NPB9"/>
<dbReference type="BioMuta" id="ACKR4"/>
<dbReference type="DMDM" id="14285406"/>
<dbReference type="MassIVE" id="Q9NPB9"/>
<dbReference type="PaxDb" id="9606-ENSP00000249887"/>
<dbReference type="PeptideAtlas" id="Q9NPB9"/>
<dbReference type="ProteomicsDB" id="81962"/>
<dbReference type="Antibodypedia" id="17718">
    <property type="antibodies" value="252 antibodies from 28 providers"/>
</dbReference>
<dbReference type="DNASU" id="51554"/>
<dbReference type="Ensembl" id="ENST00000249887.3">
    <property type="protein sequence ID" value="ENSP00000249887.2"/>
    <property type="gene ID" value="ENSG00000129048.7"/>
</dbReference>
<dbReference type="GeneID" id="51554"/>
<dbReference type="KEGG" id="hsa:51554"/>
<dbReference type="MANE-Select" id="ENST00000249887.3">
    <property type="protein sequence ID" value="ENSP00000249887.2"/>
    <property type="RefSeq nucleotide sequence ID" value="NM_016557.4"/>
    <property type="RefSeq protein sequence ID" value="NP_057641.1"/>
</dbReference>
<dbReference type="UCSC" id="uc003eow.5">
    <property type="organism name" value="human"/>
</dbReference>
<dbReference type="AGR" id="HGNC:1611"/>
<dbReference type="CTD" id="51554"/>
<dbReference type="DisGeNET" id="51554"/>
<dbReference type="GeneCards" id="ACKR4"/>
<dbReference type="HGNC" id="HGNC:1611">
    <property type="gene designation" value="ACKR4"/>
</dbReference>
<dbReference type="HPA" id="ENSG00000129048">
    <property type="expression patterns" value="Tissue enhanced (intestine)"/>
</dbReference>
<dbReference type="MIM" id="606065">
    <property type="type" value="gene"/>
</dbReference>
<dbReference type="neXtProt" id="NX_Q9NPB9"/>
<dbReference type="OpenTargets" id="ENSG00000129048"/>
<dbReference type="PharmGKB" id="PA35036"/>
<dbReference type="VEuPathDB" id="HostDB:ENSG00000129048"/>
<dbReference type="eggNOG" id="KOG3656">
    <property type="taxonomic scope" value="Eukaryota"/>
</dbReference>
<dbReference type="GeneTree" id="ENSGT01030000234667"/>
<dbReference type="HOGENOM" id="CLU_009579_8_3_1"/>
<dbReference type="InParanoid" id="Q9NPB9"/>
<dbReference type="OMA" id="YNVVKLC"/>
<dbReference type="OrthoDB" id="9874829at2759"/>
<dbReference type="PAN-GO" id="Q9NPB9">
    <property type="GO annotations" value="7 GO annotations based on evolutionary models"/>
</dbReference>
<dbReference type="PhylomeDB" id="Q9NPB9"/>
<dbReference type="TreeFam" id="TF330966"/>
<dbReference type="PathwayCommons" id="Q9NPB9"/>
<dbReference type="Reactome" id="R-HSA-380108">
    <property type="pathway name" value="Chemokine receptors bind chemokines"/>
</dbReference>
<dbReference type="SignaLink" id="Q9NPB9"/>
<dbReference type="SIGNOR" id="Q9NPB9"/>
<dbReference type="BioGRID-ORCS" id="51554">
    <property type="hits" value="19 hits in 1106 CRISPR screens"/>
</dbReference>
<dbReference type="ChiTaRS" id="ACKR4">
    <property type="organism name" value="human"/>
</dbReference>
<dbReference type="GeneWiki" id="CCRL1"/>
<dbReference type="GenomeRNAi" id="51554"/>
<dbReference type="Pharos" id="Q9NPB9">
    <property type="development level" value="Tbio"/>
</dbReference>
<dbReference type="PRO" id="PR:Q9NPB9"/>
<dbReference type="Proteomes" id="UP000005640">
    <property type="component" value="Chromosome 3"/>
</dbReference>
<dbReference type="RNAct" id="Q9NPB9">
    <property type="molecule type" value="protein"/>
</dbReference>
<dbReference type="Bgee" id="ENSG00000129048">
    <property type="expression patterns" value="Expressed in duodenum and 103 other cell types or tissues"/>
</dbReference>
<dbReference type="ExpressionAtlas" id="Q9NPB9">
    <property type="expression patterns" value="baseline and differential"/>
</dbReference>
<dbReference type="GO" id="GO:0005769">
    <property type="term" value="C:early endosome"/>
    <property type="evidence" value="ECO:0007669"/>
    <property type="project" value="UniProtKB-SubCell"/>
</dbReference>
<dbReference type="GO" id="GO:0009897">
    <property type="term" value="C:external side of plasma membrane"/>
    <property type="evidence" value="ECO:0000318"/>
    <property type="project" value="GO_Central"/>
</dbReference>
<dbReference type="GO" id="GO:0005886">
    <property type="term" value="C:plasma membrane"/>
    <property type="evidence" value="ECO:0000304"/>
    <property type="project" value="Reactome"/>
</dbReference>
<dbReference type="GO" id="GO:0055037">
    <property type="term" value="C:recycling endosome"/>
    <property type="evidence" value="ECO:0007669"/>
    <property type="project" value="UniProtKB-SubCell"/>
</dbReference>
<dbReference type="GO" id="GO:0019957">
    <property type="term" value="F:C-C chemokine binding"/>
    <property type="evidence" value="ECO:0000318"/>
    <property type="project" value="GO_Central"/>
</dbReference>
<dbReference type="GO" id="GO:0016493">
    <property type="term" value="F:C-C chemokine receptor activity"/>
    <property type="evidence" value="ECO:0000318"/>
    <property type="project" value="GO_Central"/>
</dbReference>
<dbReference type="GO" id="GO:0004950">
    <property type="term" value="F:chemokine receptor activity"/>
    <property type="evidence" value="ECO:0000314"/>
    <property type="project" value="UniProtKB"/>
</dbReference>
<dbReference type="GO" id="GO:0005044">
    <property type="term" value="F:scavenger receptor activity"/>
    <property type="evidence" value="ECO:0007669"/>
    <property type="project" value="InterPro"/>
</dbReference>
<dbReference type="GO" id="GO:0019722">
    <property type="term" value="P:calcium-mediated signaling"/>
    <property type="evidence" value="ECO:0000318"/>
    <property type="project" value="GO_Central"/>
</dbReference>
<dbReference type="GO" id="GO:0060326">
    <property type="term" value="P:cell chemotaxis"/>
    <property type="evidence" value="ECO:0000318"/>
    <property type="project" value="GO_Central"/>
</dbReference>
<dbReference type="GO" id="GO:0006935">
    <property type="term" value="P:chemotaxis"/>
    <property type="evidence" value="ECO:0000304"/>
    <property type="project" value="ProtInc"/>
</dbReference>
<dbReference type="GO" id="GO:0007186">
    <property type="term" value="P:G protein-coupled receptor signaling pathway"/>
    <property type="evidence" value="ECO:0000304"/>
    <property type="project" value="ProtInc"/>
</dbReference>
<dbReference type="GO" id="GO:0006955">
    <property type="term" value="P:immune response"/>
    <property type="evidence" value="ECO:0000318"/>
    <property type="project" value="GO_Central"/>
</dbReference>
<dbReference type="GO" id="GO:0007204">
    <property type="term" value="P:positive regulation of cytosolic calcium ion concentration"/>
    <property type="evidence" value="ECO:0000318"/>
    <property type="project" value="GO_Central"/>
</dbReference>
<dbReference type="CDD" id="cd15176">
    <property type="entry name" value="7tmA_ACKR4_CCR11"/>
    <property type="match status" value="1"/>
</dbReference>
<dbReference type="FunFam" id="1.20.1070.10:FF:000035">
    <property type="entry name" value="C-C chemokine receptor type 6"/>
    <property type="match status" value="1"/>
</dbReference>
<dbReference type="Gene3D" id="1.20.1070.10">
    <property type="entry name" value="Rhodopsin 7-helix transmembrane proteins"/>
    <property type="match status" value="1"/>
</dbReference>
<dbReference type="InterPro" id="IPR005383">
    <property type="entry name" value="ACKR4"/>
</dbReference>
<dbReference type="InterPro" id="IPR050119">
    <property type="entry name" value="CCR1-9-like"/>
</dbReference>
<dbReference type="InterPro" id="IPR000355">
    <property type="entry name" value="Chemokine_rcpt"/>
</dbReference>
<dbReference type="InterPro" id="IPR000276">
    <property type="entry name" value="GPCR_Rhodpsn"/>
</dbReference>
<dbReference type="InterPro" id="IPR017452">
    <property type="entry name" value="GPCR_Rhodpsn_7TM"/>
</dbReference>
<dbReference type="PANTHER" id="PTHR10489:SF733">
    <property type="entry name" value="ATYPICAL CHEMOKINE RECEPTOR 4"/>
    <property type="match status" value="1"/>
</dbReference>
<dbReference type="PANTHER" id="PTHR10489">
    <property type="entry name" value="CELL ADHESION MOLECULE"/>
    <property type="match status" value="1"/>
</dbReference>
<dbReference type="Pfam" id="PF00001">
    <property type="entry name" value="7tm_1"/>
    <property type="match status" value="1"/>
</dbReference>
<dbReference type="PRINTS" id="PR00657">
    <property type="entry name" value="CCCHEMOKINER"/>
</dbReference>
<dbReference type="PRINTS" id="PR01558">
    <property type="entry name" value="CHEMOKINER11"/>
</dbReference>
<dbReference type="PRINTS" id="PR00237">
    <property type="entry name" value="GPCRRHODOPSN"/>
</dbReference>
<dbReference type="SUPFAM" id="SSF81321">
    <property type="entry name" value="Family A G protein-coupled receptor-like"/>
    <property type="match status" value="1"/>
</dbReference>
<dbReference type="PROSITE" id="PS00237">
    <property type="entry name" value="G_PROTEIN_RECEP_F1_1"/>
    <property type="match status" value="1"/>
</dbReference>
<dbReference type="PROSITE" id="PS50262">
    <property type="entry name" value="G_PROTEIN_RECEP_F1_2"/>
    <property type="match status" value="1"/>
</dbReference>
<comment type="function">
    <text evidence="3 7 8">Atypical chemokine receptor that controls chemokine levels and localization via high-affinity chemokine binding that is uncoupled from classic ligand-driven signal transduction cascades, resulting instead in chemokine sequestration, degradation, or transcytosis. Also known as interceptor (internalizing receptor) or chemokine-scavenging receptor or chemokine decoy receptor. Acts as a receptor for chemokines CCL2, CCL8, CCL13, CCL19, CCL21 and CCL25. Chemokine-binding does not activate G-protein-mediated signal transduction but instead induces beta-arrestin recruitment, leading to ligand internalization. Plays an important role in controlling the migration of immune and cancer cells that express chemokine receptors CCR7 and CCR9, by reducing the availability of CCL19, CCL21, and CCL25 through internalization. Negatively regulates CXCR3-induced chemotaxis. Regulates T-cell development in the thymus.</text>
</comment>
<comment type="subunit">
    <text evidence="7 8">Forms heteromers with CXCR3. Interacts with ARRB1 and ARRB2.</text>
</comment>
<comment type="subcellular location">
    <subcellularLocation>
        <location evidence="8">Early endosome</location>
    </subcellularLocation>
    <subcellularLocation>
        <location evidence="8">Recycling endosome</location>
    </subcellularLocation>
    <subcellularLocation>
        <location evidence="8">Cell membrane</location>
        <topology evidence="8">Multi-pass membrane protein</topology>
    </subcellularLocation>
    <text>Predominantly localizes to endocytic vesicles, and upon stimulation by the ligand is internalized via caveolae. Once internalized, the ligand dissociates from the receptor, and is targeted to degradation while the receptor is recycled back to the cell membrane.</text>
</comment>
<comment type="tissue specificity">
    <text evidence="4 5 6">Predominantly expressed in heart. Lower expression in lung, pancreas, spleen, colon, skeletal muscle and small intestine.</text>
</comment>
<comment type="PTM">
    <text>The Ser/Thr residues in the C-terminal cytoplasmic tail may be phosphorylated.</text>
</comment>
<comment type="similarity">
    <text evidence="2">Belongs to the G-protein coupled receptor 1 family. Atypical chemokine receptor subfamily.</text>
</comment>
<evidence type="ECO:0000255" key="1"/>
<evidence type="ECO:0000255" key="2">
    <source>
        <dbReference type="PROSITE-ProRule" id="PRU00521"/>
    </source>
</evidence>
<evidence type="ECO:0000269" key="3">
    <source>
    </source>
</evidence>
<evidence type="ECO:0000269" key="4">
    <source>
    </source>
</evidence>
<evidence type="ECO:0000269" key="5">
    <source>
    </source>
</evidence>
<evidence type="ECO:0000269" key="6">
    <source>
    </source>
</evidence>
<evidence type="ECO:0000269" key="7">
    <source>
    </source>
</evidence>
<evidence type="ECO:0000269" key="8">
    <source>
    </source>
</evidence>